<evidence type="ECO:0000250" key="1"/>
<evidence type="ECO:0000256" key="2">
    <source>
        <dbReference type="SAM" id="MobiDB-lite"/>
    </source>
</evidence>
<evidence type="ECO:0000269" key="3">
    <source>
    </source>
</evidence>
<evidence type="ECO:0000269" key="4">
    <source>
    </source>
</evidence>
<evidence type="ECO:0000305" key="5"/>
<feature type="chain" id="PRO_0000149952" description="Arginine decarboxylase 1">
    <location>
        <begin position="1"/>
        <end position="702"/>
    </location>
</feature>
<feature type="region of interest" description="Disordered" evidence="2">
    <location>
        <begin position="668"/>
        <end position="702"/>
    </location>
</feature>
<feature type="compositionally biased region" description="Low complexity" evidence="2">
    <location>
        <begin position="668"/>
        <end position="686"/>
    </location>
</feature>
<feature type="binding site" evidence="1">
    <location>
        <begin position="336"/>
        <end position="346"/>
    </location>
    <ligand>
        <name>substrate</name>
    </ligand>
</feature>
<feature type="modified residue" description="N6-(pyridoxal phosphate)lysine" evidence="1">
    <location>
        <position position="151"/>
    </location>
</feature>
<feature type="sequence conflict" description="In Ref. 2; ABY47890." evidence="5" ref="2">
    <original>V</original>
    <variation>M</variation>
    <location>
        <position position="235"/>
    </location>
</feature>
<reference key="1">
    <citation type="journal article" date="2007" name="J. Plant Physiol.">
        <title>Molecular cloning and characterization of an arginine decarboxylase gene up-regulated by chilling stress in rice seedlings.</title>
        <authorList>
            <person name="Akiyama T."/>
            <person name="Jin S."/>
        </authorList>
    </citation>
    <scope>NUCLEOTIDE SEQUENCE [MRNA]</scope>
    <scope>TISSUE SPECIFICITY</scope>
    <scope>INDUCTION</scope>
</reference>
<reference key="2">
    <citation type="journal article" date="2010" name="Transgenic Res.">
        <title>Molecular characterization of the Arginine decarboxylase gene family in rice.</title>
        <authorList>
            <person name="Peremarti A."/>
            <person name="Bassie L."/>
            <person name="Zhu C."/>
            <person name="Christou P."/>
            <person name="Capell T."/>
        </authorList>
    </citation>
    <scope>NUCLEOTIDE SEQUENCE [MRNA]</scope>
    <scope>TISSUE SPECIFICITY</scope>
    <source>
        <strain>cv. Eyi 105</strain>
    </source>
</reference>
<reference key="3">
    <citation type="journal article" date="2005" name="Nature">
        <title>The map-based sequence of the rice genome.</title>
        <authorList>
            <consortium name="International rice genome sequencing project (IRGSP)"/>
        </authorList>
    </citation>
    <scope>NUCLEOTIDE SEQUENCE [LARGE SCALE GENOMIC DNA]</scope>
    <source>
        <strain>cv. Nipponbare</strain>
    </source>
</reference>
<reference key="4">
    <citation type="journal article" date="2008" name="Nucleic Acids Res.">
        <title>The rice annotation project database (RAP-DB): 2008 update.</title>
        <authorList>
            <consortium name="The rice annotation project (RAP)"/>
        </authorList>
    </citation>
    <scope>GENOME REANNOTATION</scope>
    <source>
        <strain>cv. Nipponbare</strain>
    </source>
</reference>
<reference key="5">
    <citation type="journal article" date="2013" name="Rice">
        <title>Improvement of the Oryza sativa Nipponbare reference genome using next generation sequence and optical map data.</title>
        <authorList>
            <person name="Kawahara Y."/>
            <person name="de la Bastide M."/>
            <person name="Hamilton J.P."/>
            <person name="Kanamori H."/>
            <person name="McCombie W.R."/>
            <person name="Ouyang S."/>
            <person name="Schwartz D.C."/>
            <person name="Tanaka T."/>
            <person name="Wu J."/>
            <person name="Zhou S."/>
            <person name="Childs K.L."/>
            <person name="Davidson R.M."/>
            <person name="Lin H."/>
            <person name="Quesada-Ocampo L."/>
            <person name="Vaillancourt B."/>
            <person name="Sakai H."/>
            <person name="Lee S.S."/>
            <person name="Kim J."/>
            <person name="Numa H."/>
            <person name="Itoh T."/>
            <person name="Buell C.R."/>
            <person name="Matsumoto T."/>
        </authorList>
    </citation>
    <scope>GENOME REANNOTATION</scope>
    <source>
        <strain>cv. Nipponbare</strain>
    </source>
</reference>
<comment type="catalytic activity">
    <reaction>
        <text>L-arginine + H(+) = agmatine + CO2</text>
        <dbReference type="Rhea" id="RHEA:17641"/>
        <dbReference type="ChEBI" id="CHEBI:15378"/>
        <dbReference type="ChEBI" id="CHEBI:16526"/>
        <dbReference type="ChEBI" id="CHEBI:32682"/>
        <dbReference type="ChEBI" id="CHEBI:58145"/>
        <dbReference type="EC" id="4.1.1.19"/>
    </reaction>
</comment>
<comment type="cofactor">
    <cofactor evidence="1">
        <name>pyridoxal 5'-phosphate</name>
        <dbReference type="ChEBI" id="CHEBI:597326"/>
    </cofactor>
</comment>
<comment type="cofactor">
    <cofactor evidence="1">
        <name>Mg(2+)</name>
        <dbReference type="ChEBI" id="CHEBI:18420"/>
    </cofactor>
</comment>
<comment type="pathway">
    <text>Amine and polyamine biosynthesis; agmatine biosynthesis; agmatine from L-arginine: step 1/1.</text>
</comment>
<comment type="tissue specificity">
    <text evidence="3 4">Expressed in roots, leaves and stems (at protein level).</text>
</comment>
<comment type="induction">
    <text evidence="3">By cold stress.</text>
</comment>
<comment type="similarity">
    <text evidence="5">Belongs to the Orn/Lys/Arg decarboxylase class-II family. SpeA subfamily.</text>
</comment>
<organism>
    <name type="scientific">Oryza sativa subsp. japonica</name>
    <name type="common">Rice</name>
    <dbReference type="NCBI Taxonomy" id="39947"/>
    <lineage>
        <taxon>Eukaryota</taxon>
        <taxon>Viridiplantae</taxon>
        <taxon>Streptophyta</taxon>
        <taxon>Embryophyta</taxon>
        <taxon>Tracheophyta</taxon>
        <taxon>Spermatophyta</taxon>
        <taxon>Magnoliopsida</taxon>
        <taxon>Liliopsida</taxon>
        <taxon>Poales</taxon>
        <taxon>Poaceae</taxon>
        <taxon>BOP clade</taxon>
        <taxon>Oryzoideae</taxon>
        <taxon>Oryzeae</taxon>
        <taxon>Oryzinae</taxon>
        <taxon>Oryza</taxon>
        <taxon>Oryza sativa</taxon>
    </lineage>
</organism>
<keyword id="KW-0210">Decarboxylase</keyword>
<keyword id="KW-0456">Lyase</keyword>
<keyword id="KW-0460">Magnesium</keyword>
<keyword id="KW-0661">Putrescine biosynthesis</keyword>
<keyword id="KW-0663">Pyridoxal phosphate</keyword>
<keyword id="KW-1185">Reference proteome</keyword>
<keyword id="KW-0745">Spermidine biosynthesis</keyword>
<gene>
    <name type="primary">ADC1</name>
    <name type="ordered locus">Os06g0131300</name>
    <name type="ordered locus">LOC_Os06g04070</name>
    <name type="ORF">P0493C11.18</name>
</gene>
<proteinExistence type="evidence at protein level"/>
<dbReference type="EC" id="4.1.1.19"/>
<dbReference type="EMBL" id="AY604047">
    <property type="protein sequence ID" value="AAT37534.1"/>
    <property type="molecule type" value="mRNA"/>
</dbReference>
<dbReference type="EMBL" id="EU220429">
    <property type="protein sequence ID" value="ABY47890.1"/>
    <property type="molecule type" value="mRNA"/>
</dbReference>
<dbReference type="EMBL" id="AP000559">
    <property type="protein sequence ID" value="BAA84799.1"/>
    <property type="molecule type" value="Genomic_DNA"/>
</dbReference>
<dbReference type="EMBL" id="AP008212">
    <property type="protein sequence ID" value="BAF18609.1"/>
    <property type="molecule type" value="Genomic_DNA"/>
</dbReference>
<dbReference type="EMBL" id="AP014962">
    <property type="protein sequence ID" value="BAS95983.1"/>
    <property type="molecule type" value="Genomic_DNA"/>
</dbReference>
<dbReference type="RefSeq" id="XP_015643038.1">
    <property type="nucleotide sequence ID" value="XM_015787552.1"/>
</dbReference>
<dbReference type="SMR" id="Q9SNN0"/>
<dbReference type="FunCoup" id="Q9SNN0">
    <property type="interactions" value="15"/>
</dbReference>
<dbReference type="STRING" id="39947.Q9SNN0"/>
<dbReference type="PaxDb" id="39947-Q9SNN0"/>
<dbReference type="EnsemblPlants" id="Os06t0131300-01">
    <property type="protein sequence ID" value="Os06t0131300-01"/>
    <property type="gene ID" value="Os06g0131300"/>
</dbReference>
<dbReference type="Gramene" id="Os06t0131300-01">
    <property type="protein sequence ID" value="Os06t0131300-01"/>
    <property type="gene ID" value="Os06g0131300"/>
</dbReference>
<dbReference type="KEGG" id="dosa:Os06g0131300"/>
<dbReference type="eggNOG" id="ENOG502QTXD">
    <property type="taxonomic scope" value="Eukaryota"/>
</dbReference>
<dbReference type="HOGENOM" id="CLU_027243_0_0_1"/>
<dbReference type="InParanoid" id="Q9SNN0"/>
<dbReference type="OMA" id="AVEYTQH"/>
<dbReference type="OrthoDB" id="3717802at2759"/>
<dbReference type="BRENDA" id="4.1.1.19">
    <property type="organism ID" value="4460"/>
</dbReference>
<dbReference type="PlantReactome" id="R-OSA-1119304">
    <property type="pathway name" value="Putrescine biosynthesis II"/>
</dbReference>
<dbReference type="PlantReactome" id="R-OSA-1119447">
    <property type="pathway name" value="Putrescine biosynthesis I"/>
</dbReference>
<dbReference type="UniPathway" id="UPA00186">
    <property type="reaction ID" value="UER00284"/>
</dbReference>
<dbReference type="Proteomes" id="UP000000763">
    <property type="component" value="Chromosome 6"/>
</dbReference>
<dbReference type="Proteomes" id="UP000059680">
    <property type="component" value="Chromosome 6"/>
</dbReference>
<dbReference type="GO" id="GO:0008792">
    <property type="term" value="F:arginine decarboxylase activity"/>
    <property type="evidence" value="ECO:0000318"/>
    <property type="project" value="GO_Central"/>
</dbReference>
<dbReference type="GO" id="GO:0006527">
    <property type="term" value="P:arginine catabolic process"/>
    <property type="evidence" value="ECO:0007669"/>
    <property type="project" value="InterPro"/>
</dbReference>
<dbReference type="GO" id="GO:0009446">
    <property type="term" value="P:putrescine biosynthetic process"/>
    <property type="evidence" value="ECO:0007669"/>
    <property type="project" value="UniProtKB-KW"/>
</dbReference>
<dbReference type="GO" id="GO:0009409">
    <property type="term" value="P:response to cold"/>
    <property type="evidence" value="ECO:0000270"/>
    <property type="project" value="UniProtKB"/>
</dbReference>
<dbReference type="GO" id="GO:0008295">
    <property type="term" value="P:spermidine biosynthetic process"/>
    <property type="evidence" value="ECO:0007669"/>
    <property type="project" value="UniProtKB-KW"/>
</dbReference>
<dbReference type="CDD" id="cd06830">
    <property type="entry name" value="PLPDE_III_ADC"/>
    <property type="match status" value="1"/>
</dbReference>
<dbReference type="FunFam" id="1.20.58.930:FF:000003">
    <property type="entry name" value="Arginine decarboxylase"/>
    <property type="match status" value="1"/>
</dbReference>
<dbReference type="FunFam" id="3.20.20.10:FF:000001">
    <property type="entry name" value="Biosynthetic arginine decarboxylase"/>
    <property type="match status" value="1"/>
</dbReference>
<dbReference type="Gene3D" id="1.20.58.930">
    <property type="match status" value="1"/>
</dbReference>
<dbReference type="Gene3D" id="3.20.20.10">
    <property type="entry name" value="Alanine racemase"/>
    <property type="match status" value="1"/>
</dbReference>
<dbReference type="Gene3D" id="2.40.37.10">
    <property type="entry name" value="Lyase, Ornithine Decarboxylase, Chain A, domain 1"/>
    <property type="match status" value="1"/>
</dbReference>
<dbReference type="InterPro" id="IPR009006">
    <property type="entry name" value="Ala_racemase/Decarboxylase_C"/>
</dbReference>
<dbReference type="InterPro" id="IPR002985">
    <property type="entry name" value="Arg_decrbxlase"/>
</dbReference>
<dbReference type="InterPro" id="IPR022644">
    <property type="entry name" value="De-COase2_N"/>
</dbReference>
<dbReference type="InterPro" id="IPR022653">
    <property type="entry name" value="De-COase2_pyr-phos_BS"/>
</dbReference>
<dbReference type="InterPro" id="IPR000183">
    <property type="entry name" value="Orn/DAP/Arg_de-COase"/>
</dbReference>
<dbReference type="InterPro" id="IPR029066">
    <property type="entry name" value="PLP-binding_barrel"/>
</dbReference>
<dbReference type="NCBIfam" id="NF003763">
    <property type="entry name" value="PRK05354.1"/>
    <property type="match status" value="1"/>
</dbReference>
<dbReference type="NCBIfam" id="TIGR01273">
    <property type="entry name" value="speA"/>
    <property type="match status" value="1"/>
</dbReference>
<dbReference type="PANTHER" id="PTHR43295">
    <property type="entry name" value="ARGININE DECARBOXYLASE"/>
    <property type="match status" value="1"/>
</dbReference>
<dbReference type="PANTHER" id="PTHR43295:SF1">
    <property type="entry name" value="ARGININE DECARBOXYLASE 1, CHLOROPLASTIC-RELATED"/>
    <property type="match status" value="1"/>
</dbReference>
<dbReference type="Pfam" id="PF02784">
    <property type="entry name" value="Orn_Arg_deC_N"/>
    <property type="match status" value="1"/>
</dbReference>
<dbReference type="PIRSF" id="PIRSF001336">
    <property type="entry name" value="Arg_decrbxlase"/>
    <property type="match status" value="1"/>
</dbReference>
<dbReference type="PRINTS" id="PR01180">
    <property type="entry name" value="ARGDCRBXLASE"/>
</dbReference>
<dbReference type="PRINTS" id="PR01179">
    <property type="entry name" value="ODADCRBXLASE"/>
</dbReference>
<dbReference type="SUPFAM" id="SSF50621">
    <property type="entry name" value="Alanine racemase C-terminal domain-like"/>
    <property type="match status" value="1"/>
</dbReference>
<dbReference type="SUPFAM" id="SSF51419">
    <property type="entry name" value="PLP-binding barrel"/>
    <property type="match status" value="1"/>
</dbReference>
<dbReference type="PROSITE" id="PS00878">
    <property type="entry name" value="ODR_DC_2_1"/>
    <property type="match status" value="1"/>
</dbReference>
<dbReference type="PROSITE" id="PS00879">
    <property type="entry name" value="ODR_DC_2_2"/>
    <property type="match status" value="1"/>
</dbReference>
<protein>
    <recommendedName>
        <fullName>Arginine decarboxylase 1</fullName>
        <shortName>ARGDC1</shortName>
        <shortName>OsADC1</shortName>
        <ecNumber>4.1.1.19</ecNumber>
    </recommendedName>
</protein>
<name>SPE1_ORYSJ</name>
<sequence length="702" mass="74064">MPALAVDAAAPVAHAFACDAARFPAPLLGPAAAAAAVAEKPDAAAWSADLSSALYNVDGWGAPYFFVNDDGDVAVRPHGAATLPGQEIDLAKVVAKAAGPRSGGGLGLPLPLLVRFPDVLRHRVEALNAAFDYAVRSTGYGGRYQGVYPVKCNQDRHVVEDIVEFGEPFRFGLEAGSKPELLLAMSCLAARGNPDALLICNGYKDDEYVSLALIARTMGLNTVIVLEQEEELDIVVDASRRLGVRPVVGMRAKLRTKHAGHFGSTSGEKGKFGLNAAQILSVVAKLKTLGMLDCLQLLHFHIGSQIPTTALLGDGVGEAAQIYCELARLGAAMRVIDVGGGLGIDYDGSHSAQTDMSVAYSLEEYAAAVVAAVGRVCDRKGVAHPIICSESGRALVSHHSVLVFEAFSASAPGRIDPATGYLLDELTDDCHADYRNLMAAAVRGDFDTCALYADQLKRRCADQFKDGVLGLEHLAAVDSLCEIVARGMGAAEPPRTYHINLSVFTSLPDMWAIGQMFPIIPIQRLGERPAVDGVLSDLTCDSDGKVDHFIGGRHSLPLHELPVHGTRGYYLGMFLGGAYQEALGGLHNLFGGPSVVRVSQSDGPHCFAVTRAAAGPSCADVLRSMQHEPEVMFEVLKQRTDGATAAALARAFGAMPYLSFDPEAAAMASGESSGMSSDSEGSAAGAAEEDDDEWEFMRGLTV</sequence>
<accession>Q9SNN0</accession>
<accession>A0A0P0WSJ3</accession>
<accession>A9YLB8</accession>
<accession>Q0DEW4</accession>
<accession>Q6J285</accession>